<evidence type="ECO:0000250" key="1"/>
<evidence type="ECO:0000256" key="2">
    <source>
        <dbReference type="SAM" id="MobiDB-lite"/>
    </source>
</evidence>
<evidence type="ECO:0000305" key="3"/>
<reference key="1">
    <citation type="journal article" date="2005" name="Nature">
        <title>The map-based sequence of the rice genome.</title>
        <authorList>
            <consortium name="International rice genome sequencing project (IRGSP)"/>
        </authorList>
    </citation>
    <scope>NUCLEOTIDE SEQUENCE [LARGE SCALE GENOMIC DNA]</scope>
    <source>
        <strain>cv. Nipponbare</strain>
    </source>
</reference>
<reference key="2">
    <citation type="journal article" date="2008" name="Nucleic Acids Res.">
        <title>The rice annotation project database (RAP-DB): 2008 update.</title>
        <authorList>
            <consortium name="The rice annotation project (RAP)"/>
        </authorList>
    </citation>
    <scope>GENOME REANNOTATION</scope>
    <source>
        <strain>cv. Nipponbare</strain>
    </source>
</reference>
<reference key="3">
    <citation type="journal article" date="2013" name="Rice">
        <title>Improvement of the Oryza sativa Nipponbare reference genome using next generation sequence and optical map data.</title>
        <authorList>
            <person name="Kawahara Y."/>
            <person name="de la Bastide M."/>
            <person name="Hamilton J.P."/>
            <person name="Kanamori H."/>
            <person name="McCombie W.R."/>
            <person name="Ouyang S."/>
            <person name="Schwartz D.C."/>
            <person name="Tanaka T."/>
            <person name="Wu J."/>
            <person name="Zhou S."/>
            <person name="Childs K.L."/>
            <person name="Davidson R.M."/>
            <person name="Lin H."/>
            <person name="Quesada-Ocampo L."/>
            <person name="Vaillancourt B."/>
            <person name="Sakai H."/>
            <person name="Lee S.S."/>
            <person name="Kim J."/>
            <person name="Numa H."/>
            <person name="Itoh T."/>
            <person name="Buell C.R."/>
            <person name="Matsumoto T."/>
        </authorList>
    </citation>
    <scope>GENOME REANNOTATION</scope>
    <source>
        <strain>cv. Nipponbare</strain>
    </source>
</reference>
<dbReference type="EC" id="1.3.1.-"/>
<dbReference type="EMBL" id="AP003525">
    <property type="protein sequence ID" value="BAD35323.1"/>
    <property type="molecule type" value="Genomic_DNA"/>
</dbReference>
<dbReference type="EMBL" id="AP004741">
    <property type="protein sequence ID" value="BAD35831.1"/>
    <property type="molecule type" value="Genomic_DNA"/>
</dbReference>
<dbReference type="EMBL" id="AP008212">
    <property type="protein sequence ID" value="BAF19056.2"/>
    <property type="status" value="ALT_SEQ"/>
    <property type="molecule type" value="Genomic_DNA"/>
</dbReference>
<dbReference type="EMBL" id="AP014962">
    <property type="status" value="NOT_ANNOTATED_CDS"/>
    <property type="molecule type" value="Genomic_DNA"/>
</dbReference>
<dbReference type="RefSeq" id="XP_015643918.1">
    <property type="nucleotide sequence ID" value="XM_015788432.1"/>
</dbReference>
<dbReference type="SMR" id="Q69TH6"/>
<dbReference type="FunCoup" id="Q69TH6">
    <property type="interactions" value="156"/>
</dbReference>
<dbReference type="STRING" id="39947.Q69TH6"/>
<dbReference type="PaxDb" id="39947-Q69TH6"/>
<dbReference type="KEGG" id="dosa:Os06g0216000"/>
<dbReference type="eggNOG" id="KOG0134">
    <property type="taxonomic scope" value="Eukaryota"/>
</dbReference>
<dbReference type="InParanoid" id="Q69TH6"/>
<dbReference type="OrthoDB" id="1663137at2759"/>
<dbReference type="PlantReactome" id="R-OSA-6787011">
    <property type="pathway name" value="Jasmonic acid signaling"/>
</dbReference>
<dbReference type="Proteomes" id="UP000000763">
    <property type="component" value="Chromosome 6"/>
</dbReference>
<dbReference type="Proteomes" id="UP000059680">
    <property type="component" value="Chromosome 6"/>
</dbReference>
<dbReference type="GO" id="GO:0010181">
    <property type="term" value="F:FMN binding"/>
    <property type="evidence" value="ECO:0007669"/>
    <property type="project" value="InterPro"/>
</dbReference>
<dbReference type="GO" id="GO:0016491">
    <property type="term" value="F:oxidoreductase activity"/>
    <property type="evidence" value="ECO:0000318"/>
    <property type="project" value="GO_Central"/>
</dbReference>
<dbReference type="GO" id="GO:0009695">
    <property type="term" value="P:jasmonic acid biosynthetic process"/>
    <property type="evidence" value="ECO:0000318"/>
    <property type="project" value="GO_Central"/>
</dbReference>
<dbReference type="GO" id="GO:0031408">
    <property type="term" value="P:oxylipin biosynthetic process"/>
    <property type="evidence" value="ECO:0000318"/>
    <property type="project" value="GO_Central"/>
</dbReference>
<dbReference type="CDD" id="cd02933">
    <property type="entry name" value="OYE_like_FMN"/>
    <property type="match status" value="1"/>
</dbReference>
<dbReference type="FunFam" id="3.20.20.70:FF:000073">
    <property type="entry name" value="12-oxophytodienoate reductase 3"/>
    <property type="match status" value="1"/>
</dbReference>
<dbReference type="Gene3D" id="3.20.20.70">
    <property type="entry name" value="Aldolase class I"/>
    <property type="match status" value="1"/>
</dbReference>
<dbReference type="InterPro" id="IPR013785">
    <property type="entry name" value="Aldolase_TIM"/>
</dbReference>
<dbReference type="InterPro" id="IPR001155">
    <property type="entry name" value="OxRdtase_FMN_N"/>
</dbReference>
<dbReference type="InterPro" id="IPR045247">
    <property type="entry name" value="Oye-like"/>
</dbReference>
<dbReference type="PANTHER" id="PTHR22893:SF44">
    <property type="entry name" value="12-OXOPHYTODIENOATE REDUCTASE 1"/>
    <property type="match status" value="1"/>
</dbReference>
<dbReference type="PANTHER" id="PTHR22893">
    <property type="entry name" value="NADH OXIDOREDUCTASE-RELATED"/>
    <property type="match status" value="1"/>
</dbReference>
<dbReference type="Pfam" id="PF00724">
    <property type="entry name" value="Oxidored_FMN"/>
    <property type="match status" value="1"/>
</dbReference>
<dbReference type="SUPFAM" id="SSF51395">
    <property type="entry name" value="FMN-linked oxidoreductases"/>
    <property type="match status" value="1"/>
</dbReference>
<sequence length="382" mass="42409">MVQAQAAAKEAAAAAIPLMAPYKMGRFELSHRVVLAPLTRCRSYDHVPQPHAALYYSQRATNGGLLISEATGVSATGEGYPEIPGVWTRQQVKAWKPIVDAVHRKGALFFCQLAHVGRASTNDQQPNGQAPISSTDKQITPDDSHTVYSKPRRLRTDEIPHVVDDFRVAARNAIEAGFDGVEIHGAHGYLIDQFMKDSANGRTDQYGGSLENRCRFAVEVIDAVVAEVGADRVGIRLSPYIDFMDCFDSNPEALGSYMVRQLNKHPELLYCHMVEPRMATVEGRRKINHGLLPFRKQFNGTFIASGGYDREEGNKVVDDGYADLVAYGRLFLANPDLPRRFELNAPLNKYDGSTFYTHDPVVGYTDYPFLEEKKEDSATVIV</sequence>
<name>OPR3_ORYSJ</name>
<keyword id="KW-0275">Fatty acid biosynthesis</keyword>
<keyword id="KW-0276">Fatty acid metabolism</keyword>
<keyword id="KW-0285">Flavoprotein</keyword>
<keyword id="KW-0288">FMN</keyword>
<keyword id="KW-0444">Lipid biosynthesis</keyword>
<keyword id="KW-0443">Lipid metabolism</keyword>
<keyword id="KW-0521">NADP</keyword>
<keyword id="KW-0560">Oxidoreductase</keyword>
<keyword id="KW-0925">Oxylipin biosynthesis</keyword>
<keyword id="KW-1185">Reference proteome</keyword>
<proteinExistence type="inferred from homology"/>
<gene>
    <name type="primary">OPR3</name>
    <name type="ordered locus">Os06g0216000</name>
    <name type="ordered locus">LOC_Os06g11260</name>
    <name type="ORF">OSJNBb0024N18.10</name>
    <name type="ORF">P0537F07.32</name>
</gene>
<feature type="chain" id="PRO_0000410709" description="Putative 12-oxophytodienoate reductase 3">
    <location>
        <begin position="1"/>
        <end position="382"/>
    </location>
</feature>
<feature type="region of interest" description="Disordered" evidence="2">
    <location>
        <begin position="120"/>
        <end position="147"/>
    </location>
</feature>
<feature type="compositionally biased region" description="Polar residues" evidence="2">
    <location>
        <begin position="120"/>
        <end position="138"/>
    </location>
</feature>
<feature type="active site" description="Proton donor" evidence="1">
    <location>
        <position position="189"/>
    </location>
</feature>
<feature type="binding site" evidence="1">
    <location>
        <begin position="37"/>
        <end position="39"/>
    </location>
    <ligand>
        <name>FMN</name>
        <dbReference type="ChEBI" id="CHEBI:58210"/>
    </ligand>
</feature>
<feature type="binding site" evidence="1">
    <location>
        <position position="70"/>
    </location>
    <ligand>
        <name>FMN</name>
        <dbReference type="ChEBI" id="CHEBI:58210"/>
    </ligand>
</feature>
<feature type="binding site" evidence="1">
    <location>
        <position position="112"/>
    </location>
    <ligand>
        <name>FMN</name>
        <dbReference type="ChEBI" id="CHEBI:58210"/>
    </ligand>
</feature>
<feature type="binding site" evidence="1">
    <location>
        <begin position="184"/>
        <end position="187"/>
    </location>
    <ligand>
        <name>substrate</name>
    </ligand>
</feature>
<feature type="binding site" evidence="1">
    <location>
        <position position="236"/>
    </location>
    <ligand>
        <name>FMN</name>
        <dbReference type="ChEBI" id="CHEBI:58210"/>
    </ligand>
</feature>
<feature type="binding site" evidence="1">
    <location>
        <position position="277"/>
    </location>
    <ligand>
        <name>substrate</name>
    </ligand>
</feature>
<feature type="binding site" evidence="1">
    <location>
        <position position="307"/>
    </location>
    <ligand>
        <name>FMN</name>
        <dbReference type="ChEBI" id="CHEBI:58210"/>
    </ligand>
</feature>
<feature type="binding site" evidence="1">
    <location>
        <begin position="328"/>
        <end position="329"/>
    </location>
    <ligand>
        <name>FMN</name>
        <dbReference type="ChEBI" id="CHEBI:58210"/>
    </ligand>
</feature>
<accession>Q69TH6</accession>
<accession>Q0DDL7</accession>
<protein>
    <recommendedName>
        <fullName>Putative 12-oxophytodienoate reductase 3</fullName>
        <ecNumber>1.3.1.-</ecNumber>
    </recommendedName>
    <alternativeName>
        <fullName>OPDA-reductase 3</fullName>
        <shortName>OsOPR3</shortName>
    </alternativeName>
</protein>
<comment type="function">
    <text evidence="1">Putative oxophytodienoate reductase that may be involved in the biosynthesis or metabolism of oxylipin signaling molecules.</text>
</comment>
<comment type="cofactor">
    <cofactor>
        <name>FMN</name>
        <dbReference type="ChEBI" id="CHEBI:58210"/>
    </cofactor>
</comment>
<comment type="similarity">
    <text evidence="3">Belongs to the NADH:flavin oxidoreductase/NADH oxidase family.</text>
</comment>
<comment type="sequence caution" evidence="3">
    <conflict type="erroneous gene model prediction">
        <sequence resource="EMBL-CDS" id="BAF19056"/>
    </conflict>
</comment>
<organism>
    <name type="scientific">Oryza sativa subsp. japonica</name>
    <name type="common">Rice</name>
    <dbReference type="NCBI Taxonomy" id="39947"/>
    <lineage>
        <taxon>Eukaryota</taxon>
        <taxon>Viridiplantae</taxon>
        <taxon>Streptophyta</taxon>
        <taxon>Embryophyta</taxon>
        <taxon>Tracheophyta</taxon>
        <taxon>Spermatophyta</taxon>
        <taxon>Magnoliopsida</taxon>
        <taxon>Liliopsida</taxon>
        <taxon>Poales</taxon>
        <taxon>Poaceae</taxon>
        <taxon>BOP clade</taxon>
        <taxon>Oryzoideae</taxon>
        <taxon>Oryzeae</taxon>
        <taxon>Oryzinae</taxon>
        <taxon>Oryza</taxon>
        <taxon>Oryza sativa</taxon>
    </lineage>
</organism>